<organism>
    <name type="scientific">Methanocaldococcus jannaschii (strain ATCC 43067 / DSM 2661 / JAL-1 / JCM 10045 / NBRC 100440)</name>
    <name type="common">Methanococcus jannaschii</name>
    <dbReference type="NCBI Taxonomy" id="243232"/>
    <lineage>
        <taxon>Archaea</taxon>
        <taxon>Methanobacteriati</taxon>
        <taxon>Methanobacteriota</taxon>
        <taxon>Methanomada group</taxon>
        <taxon>Methanococci</taxon>
        <taxon>Methanococcales</taxon>
        <taxon>Methanocaldococcaceae</taxon>
        <taxon>Methanocaldococcus</taxon>
    </lineage>
</organism>
<comment type="function">
    <text evidence="1">Specifically catalyzes the AdoMet-dependent 2'-O-ribose methylation of cytidine at position 56 in tRNAs.</text>
</comment>
<comment type="catalytic activity">
    <reaction evidence="1">
        <text>cytidine(56) in tRNA + S-adenosyl-L-methionine = 2'-O-methylcytidine(56) in tRNA + S-adenosyl-L-homocysteine + H(+)</text>
        <dbReference type="Rhea" id="RHEA:42968"/>
        <dbReference type="Rhea" id="RHEA-COMP:10308"/>
        <dbReference type="Rhea" id="RHEA-COMP:10309"/>
        <dbReference type="ChEBI" id="CHEBI:15378"/>
        <dbReference type="ChEBI" id="CHEBI:57856"/>
        <dbReference type="ChEBI" id="CHEBI:59789"/>
        <dbReference type="ChEBI" id="CHEBI:74495"/>
        <dbReference type="ChEBI" id="CHEBI:82748"/>
        <dbReference type="EC" id="2.1.1.206"/>
    </reaction>
</comment>
<comment type="subunit">
    <text evidence="1">Homodimer.</text>
</comment>
<comment type="subcellular location">
    <subcellularLocation>
        <location evidence="1">Cytoplasm</location>
    </subcellularLocation>
</comment>
<comment type="similarity">
    <text evidence="1">Belongs to the aTrm56 family.</text>
</comment>
<name>TRM56_METJA</name>
<keyword id="KW-0963">Cytoplasm</keyword>
<keyword id="KW-0489">Methyltransferase</keyword>
<keyword id="KW-1185">Reference proteome</keyword>
<keyword id="KW-0949">S-adenosyl-L-methionine</keyword>
<keyword id="KW-0808">Transferase</keyword>
<keyword id="KW-0819">tRNA processing</keyword>
<reference key="1">
    <citation type="journal article" date="1996" name="Science">
        <title>Complete genome sequence of the methanogenic archaeon, Methanococcus jannaschii.</title>
        <authorList>
            <person name="Bult C.J."/>
            <person name="White O."/>
            <person name="Olsen G.J."/>
            <person name="Zhou L."/>
            <person name="Fleischmann R.D."/>
            <person name="Sutton G.G."/>
            <person name="Blake J.A."/>
            <person name="FitzGerald L.M."/>
            <person name="Clayton R.A."/>
            <person name="Gocayne J.D."/>
            <person name="Kerlavage A.R."/>
            <person name="Dougherty B.A."/>
            <person name="Tomb J.-F."/>
            <person name="Adams M.D."/>
            <person name="Reich C.I."/>
            <person name="Overbeek R."/>
            <person name="Kirkness E.F."/>
            <person name="Weinstock K.G."/>
            <person name="Merrick J.M."/>
            <person name="Glodek A."/>
            <person name="Scott J.L."/>
            <person name="Geoghagen N.S.M."/>
            <person name="Weidman J.F."/>
            <person name="Fuhrmann J.L."/>
            <person name="Nguyen D."/>
            <person name="Utterback T.R."/>
            <person name="Kelley J.M."/>
            <person name="Peterson J.D."/>
            <person name="Sadow P.W."/>
            <person name="Hanna M.C."/>
            <person name="Cotton M.D."/>
            <person name="Roberts K.M."/>
            <person name="Hurst M.A."/>
            <person name="Kaine B.P."/>
            <person name="Borodovsky M."/>
            <person name="Klenk H.-P."/>
            <person name="Fraser C.M."/>
            <person name="Smith H.O."/>
            <person name="Woese C.R."/>
            <person name="Venter J.C."/>
        </authorList>
    </citation>
    <scope>NUCLEOTIDE SEQUENCE [LARGE SCALE GENOMIC DNA]</scope>
    <source>
        <strain>ATCC 43067 / DSM 2661 / JAL-1 / JCM 10045 / NBRC 100440</strain>
    </source>
</reference>
<dbReference type="EC" id="2.1.1.206" evidence="1"/>
<dbReference type="EMBL" id="L77117">
    <property type="protein sequence ID" value="AAB99395.1"/>
    <property type="molecule type" value="Genomic_DNA"/>
</dbReference>
<dbReference type="PIR" id="H64472">
    <property type="entry name" value="H64472"/>
</dbReference>
<dbReference type="RefSeq" id="WP_010870902.1">
    <property type="nucleotide sequence ID" value="NC_000909.1"/>
</dbReference>
<dbReference type="SMR" id="Q58780"/>
<dbReference type="FunCoup" id="Q58780">
    <property type="interactions" value="2"/>
</dbReference>
<dbReference type="STRING" id="243232.MJ_1385"/>
<dbReference type="PaxDb" id="243232-MJ_1385"/>
<dbReference type="EnsemblBacteria" id="AAB99395">
    <property type="protein sequence ID" value="AAB99395"/>
    <property type="gene ID" value="MJ_1385"/>
</dbReference>
<dbReference type="GeneID" id="1452288"/>
<dbReference type="KEGG" id="mja:MJ_1385"/>
<dbReference type="eggNOG" id="arCOG01857">
    <property type="taxonomic scope" value="Archaea"/>
</dbReference>
<dbReference type="HOGENOM" id="CLU_123709_0_0_2"/>
<dbReference type="InParanoid" id="Q58780"/>
<dbReference type="OrthoDB" id="14397at2157"/>
<dbReference type="PhylomeDB" id="Q58780"/>
<dbReference type="Proteomes" id="UP000000805">
    <property type="component" value="Chromosome"/>
</dbReference>
<dbReference type="GO" id="GO:0005737">
    <property type="term" value="C:cytoplasm"/>
    <property type="evidence" value="ECO:0007669"/>
    <property type="project" value="UniProtKB-SubCell"/>
</dbReference>
<dbReference type="GO" id="GO:0106059">
    <property type="term" value="F:tRNA (cytidine(56)-2'-O)-methyltransferase activity"/>
    <property type="evidence" value="ECO:0007669"/>
    <property type="project" value="UniProtKB-EC"/>
</dbReference>
<dbReference type="GO" id="GO:0002128">
    <property type="term" value="P:tRNA nucleoside ribose methylation"/>
    <property type="evidence" value="ECO:0007669"/>
    <property type="project" value="UniProtKB-UniRule"/>
</dbReference>
<dbReference type="CDD" id="cd18083">
    <property type="entry name" value="aTrm56-like"/>
    <property type="match status" value="1"/>
</dbReference>
<dbReference type="Gene3D" id="3.40.1280.10">
    <property type="match status" value="1"/>
</dbReference>
<dbReference type="HAMAP" id="MF_00077">
    <property type="entry name" value="tRNA_methyltr_aTrm56"/>
    <property type="match status" value="1"/>
</dbReference>
<dbReference type="InterPro" id="IPR029028">
    <property type="entry name" value="Alpha/beta_knot_MTases"/>
</dbReference>
<dbReference type="InterPro" id="IPR029026">
    <property type="entry name" value="tRNA_m1G_MTases_N"/>
</dbReference>
<dbReference type="InterPro" id="IPR002845">
    <property type="entry name" value="tRNA_mtfrase_aTrm56"/>
</dbReference>
<dbReference type="NCBIfam" id="NF003048">
    <property type="entry name" value="PRK03958.1"/>
    <property type="match status" value="1"/>
</dbReference>
<dbReference type="PANTHER" id="PTHR42197">
    <property type="entry name" value="TRNA (CYTIDINE(56)-2'-O)-METHYLTRANSFERASE"/>
    <property type="match status" value="1"/>
</dbReference>
<dbReference type="PANTHER" id="PTHR42197:SF1">
    <property type="entry name" value="TRNA (CYTIDINE(56)-2'-O)-METHYLTRANSFERASE"/>
    <property type="match status" value="1"/>
</dbReference>
<dbReference type="Pfam" id="PF01994">
    <property type="entry name" value="Trm56"/>
    <property type="match status" value="1"/>
</dbReference>
<dbReference type="PIRSF" id="PIRSF016123">
    <property type="entry name" value="UCP016123"/>
    <property type="match status" value="1"/>
</dbReference>
<dbReference type="SUPFAM" id="SSF75217">
    <property type="entry name" value="alpha/beta knot"/>
    <property type="match status" value="1"/>
</dbReference>
<evidence type="ECO:0000255" key="1">
    <source>
        <dbReference type="HAMAP-Rule" id="MF_00077"/>
    </source>
</evidence>
<feature type="chain" id="PRO_0000146929" description="tRNA (cytidine(56)-2'-O)-methyltransferase">
    <location>
        <begin position="1"/>
        <end position="179"/>
    </location>
</feature>
<feature type="binding site" evidence="1">
    <location>
        <position position="82"/>
    </location>
    <ligand>
        <name>S-adenosyl-L-methionine</name>
        <dbReference type="ChEBI" id="CHEBI:59789"/>
    </ligand>
</feature>
<feature type="binding site" evidence="1">
    <location>
        <begin position="110"/>
        <end position="114"/>
    </location>
    <ligand>
        <name>S-adenosyl-L-methionine</name>
        <dbReference type="ChEBI" id="CHEBI:59789"/>
    </ligand>
</feature>
<feature type="binding site" evidence="1">
    <location>
        <begin position="128"/>
        <end position="135"/>
    </location>
    <ligand>
        <name>S-adenosyl-L-methionine</name>
        <dbReference type="ChEBI" id="CHEBI:59789"/>
    </ligand>
</feature>
<protein>
    <recommendedName>
        <fullName evidence="1">tRNA (cytidine(56)-2'-O)-methyltransferase</fullName>
        <ecNumber evidence="1">2.1.1.206</ecNumber>
    </recommendedName>
    <alternativeName>
        <fullName evidence="1">tRNA ribose 2'-O-methyltransferase aTrm56</fullName>
    </alternativeName>
</protein>
<accession>Q58780</accession>
<sequence>MVVEVLRLGHRGDRDKRISTHVALTARALGADKIIFTTEDEHVENSVKKVVESWGGNFEFVVEKHWRKYIREFKKRGIVVHLTMYGANINEIMPEIREISRDKDILVIVGAEKVPKEVYELADYNVSVGNQPHSEVAALAIFLDRLFEGKTLYRDFEDAKIKIVPSKDGKVVIREKQNK</sequence>
<gene>
    <name type="ordered locus">MJ1385</name>
</gene>
<proteinExistence type="inferred from homology"/>